<reference key="1">
    <citation type="submission" date="2001-05" db="EMBL/GenBank/DDBJ databases">
        <title>Systematic genome-wide analysis of F-box protein-encoding genes in fission yeast.</title>
        <authorList>
            <person name="Harrison C.L."/>
            <person name="Toda T."/>
        </authorList>
    </citation>
    <scope>NUCLEOTIDE SEQUENCE [GENOMIC DNA]</scope>
</reference>
<reference key="2">
    <citation type="journal article" date="2002" name="Nature">
        <title>The genome sequence of Schizosaccharomyces pombe.</title>
        <authorList>
            <person name="Wood V."/>
            <person name="Gwilliam R."/>
            <person name="Rajandream M.A."/>
            <person name="Lyne M.H."/>
            <person name="Lyne R."/>
            <person name="Stewart A."/>
            <person name="Sgouros J.G."/>
            <person name="Peat N."/>
            <person name="Hayles J."/>
            <person name="Baker S.G."/>
            <person name="Basham D."/>
            <person name="Bowman S."/>
            <person name="Brooks K."/>
            <person name="Brown D."/>
            <person name="Brown S."/>
            <person name="Chillingworth T."/>
            <person name="Churcher C.M."/>
            <person name="Collins M."/>
            <person name="Connor R."/>
            <person name="Cronin A."/>
            <person name="Davis P."/>
            <person name="Feltwell T."/>
            <person name="Fraser A."/>
            <person name="Gentles S."/>
            <person name="Goble A."/>
            <person name="Hamlin N."/>
            <person name="Harris D.E."/>
            <person name="Hidalgo J."/>
            <person name="Hodgson G."/>
            <person name="Holroyd S."/>
            <person name="Hornsby T."/>
            <person name="Howarth S."/>
            <person name="Huckle E.J."/>
            <person name="Hunt S."/>
            <person name="Jagels K."/>
            <person name="James K.D."/>
            <person name="Jones L."/>
            <person name="Jones M."/>
            <person name="Leather S."/>
            <person name="McDonald S."/>
            <person name="McLean J."/>
            <person name="Mooney P."/>
            <person name="Moule S."/>
            <person name="Mungall K.L."/>
            <person name="Murphy L.D."/>
            <person name="Niblett D."/>
            <person name="Odell C."/>
            <person name="Oliver K."/>
            <person name="O'Neil S."/>
            <person name="Pearson D."/>
            <person name="Quail M.A."/>
            <person name="Rabbinowitsch E."/>
            <person name="Rutherford K.M."/>
            <person name="Rutter S."/>
            <person name="Saunders D."/>
            <person name="Seeger K."/>
            <person name="Sharp S."/>
            <person name="Skelton J."/>
            <person name="Simmonds M.N."/>
            <person name="Squares R."/>
            <person name="Squares S."/>
            <person name="Stevens K."/>
            <person name="Taylor K."/>
            <person name="Taylor R.G."/>
            <person name="Tivey A."/>
            <person name="Walsh S.V."/>
            <person name="Warren T."/>
            <person name="Whitehead S."/>
            <person name="Woodward J.R."/>
            <person name="Volckaert G."/>
            <person name="Aert R."/>
            <person name="Robben J."/>
            <person name="Grymonprez B."/>
            <person name="Weltjens I."/>
            <person name="Vanstreels E."/>
            <person name="Rieger M."/>
            <person name="Schaefer M."/>
            <person name="Mueller-Auer S."/>
            <person name="Gabel C."/>
            <person name="Fuchs M."/>
            <person name="Duesterhoeft A."/>
            <person name="Fritzc C."/>
            <person name="Holzer E."/>
            <person name="Moestl D."/>
            <person name="Hilbert H."/>
            <person name="Borzym K."/>
            <person name="Langer I."/>
            <person name="Beck A."/>
            <person name="Lehrach H."/>
            <person name="Reinhardt R."/>
            <person name="Pohl T.M."/>
            <person name="Eger P."/>
            <person name="Zimmermann W."/>
            <person name="Wedler H."/>
            <person name="Wambutt R."/>
            <person name="Purnelle B."/>
            <person name="Goffeau A."/>
            <person name="Cadieu E."/>
            <person name="Dreano S."/>
            <person name="Gloux S."/>
            <person name="Lelaure V."/>
            <person name="Mottier S."/>
            <person name="Galibert F."/>
            <person name="Aves S.J."/>
            <person name="Xiang Z."/>
            <person name="Hunt C."/>
            <person name="Moore K."/>
            <person name="Hurst S.M."/>
            <person name="Lucas M."/>
            <person name="Rochet M."/>
            <person name="Gaillardin C."/>
            <person name="Tallada V.A."/>
            <person name="Garzon A."/>
            <person name="Thode G."/>
            <person name="Daga R.R."/>
            <person name="Cruzado L."/>
            <person name="Jimenez J."/>
            <person name="Sanchez M."/>
            <person name="del Rey F."/>
            <person name="Benito J."/>
            <person name="Dominguez A."/>
            <person name="Revuelta J.L."/>
            <person name="Moreno S."/>
            <person name="Armstrong J."/>
            <person name="Forsburg S.L."/>
            <person name="Cerutti L."/>
            <person name="Lowe T."/>
            <person name="McCombie W.R."/>
            <person name="Paulsen I."/>
            <person name="Potashkin J."/>
            <person name="Shpakovski G.V."/>
            <person name="Ussery D."/>
            <person name="Barrell B.G."/>
            <person name="Nurse P."/>
        </authorList>
    </citation>
    <scope>NUCLEOTIDE SEQUENCE [LARGE SCALE GENOMIC DNA]</scope>
    <source>
        <strain>972 / ATCC 24843</strain>
    </source>
</reference>
<reference key="3">
    <citation type="journal article" date="2004" name="Genes Cells">
        <title>Molecular interactions of fission yeast Skp1 and its role in the DNA damage checkpoint.</title>
        <authorList>
            <person name="Lehmann A."/>
            <person name="Katayama S."/>
            <person name="Harrison C."/>
            <person name="Dhut S."/>
            <person name="Kitamura K."/>
            <person name="McDonald N."/>
            <person name="Toda T."/>
        </authorList>
    </citation>
    <scope>INTERACTION WITH SKP1</scope>
</reference>
<reference key="4">
    <citation type="journal article" date="2006" name="Nat. Biotechnol.">
        <title>ORFeome cloning and global analysis of protein localization in the fission yeast Schizosaccharomyces pombe.</title>
        <authorList>
            <person name="Matsuyama A."/>
            <person name="Arai R."/>
            <person name="Yashiroda Y."/>
            <person name="Shirai A."/>
            <person name="Kamata A."/>
            <person name="Sekido S."/>
            <person name="Kobayashi Y."/>
            <person name="Hashimoto A."/>
            <person name="Hamamoto M."/>
            <person name="Hiraoka Y."/>
            <person name="Horinouchi S."/>
            <person name="Yoshida M."/>
        </authorList>
    </citation>
    <scope>SUBCELLULAR LOCATION [LARGE SCALE ANALYSIS]</scope>
</reference>
<feature type="chain" id="PRO_0000119976" description="F-box protein pof9">
    <location>
        <begin position="1"/>
        <end position="467"/>
    </location>
</feature>
<feature type="domain" description="F-box" evidence="1">
    <location>
        <begin position="3"/>
        <end position="49"/>
    </location>
</feature>
<feature type="repeat" description="RCC1 1">
    <location>
        <begin position="77"/>
        <end position="131"/>
    </location>
</feature>
<feature type="repeat" description="RCC1 2">
    <location>
        <begin position="302"/>
        <end position="354"/>
    </location>
</feature>
<feature type="repeat" description="RCC1 3">
    <location>
        <begin position="355"/>
        <end position="417"/>
    </location>
</feature>
<organism>
    <name type="scientific">Schizosaccharomyces pombe (strain 972 / ATCC 24843)</name>
    <name type="common">Fission yeast</name>
    <dbReference type="NCBI Taxonomy" id="284812"/>
    <lineage>
        <taxon>Eukaryota</taxon>
        <taxon>Fungi</taxon>
        <taxon>Dikarya</taxon>
        <taxon>Ascomycota</taxon>
        <taxon>Taphrinomycotina</taxon>
        <taxon>Schizosaccharomycetes</taxon>
        <taxon>Schizosaccharomycetales</taxon>
        <taxon>Schizosaccharomycetaceae</taxon>
        <taxon>Schizosaccharomyces</taxon>
    </lineage>
</organism>
<proteinExistence type="evidence at protein level"/>
<dbReference type="EMBL" id="AB061727">
    <property type="protein sequence ID" value="BAB55638.1"/>
    <property type="molecule type" value="Genomic_DNA"/>
</dbReference>
<dbReference type="EMBL" id="CU329671">
    <property type="protein sequence ID" value="CAA20302.1"/>
    <property type="molecule type" value="Genomic_DNA"/>
</dbReference>
<dbReference type="PIR" id="T40409">
    <property type="entry name" value="T40409"/>
</dbReference>
<dbReference type="RefSeq" id="NP_595769.1">
    <property type="nucleotide sequence ID" value="NM_001021670.1"/>
</dbReference>
<dbReference type="SMR" id="O74381"/>
<dbReference type="BioGRID" id="277513">
    <property type="interactions" value="96"/>
</dbReference>
<dbReference type="FunCoup" id="O74381">
    <property type="interactions" value="420"/>
</dbReference>
<dbReference type="IntAct" id="O74381">
    <property type="interactions" value="1"/>
</dbReference>
<dbReference type="STRING" id="284812.O74381"/>
<dbReference type="PaxDb" id="4896-SPBC3H7.06c.1"/>
<dbReference type="EnsemblFungi" id="SPBC3H7.06c.1">
    <property type="protein sequence ID" value="SPBC3H7.06c.1:pep"/>
    <property type="gene ID" value="SPBC3H7.06c"/>
</dbReference>
<dbReference type="GeneID" id="2540997"/>
<dbReference type="KEGG" id="spo:2540997"/>
<dbReference type="PomBase" id="SPBC3H7.06c">
    <property type="gene designation" value="pof9"/>
</dbReference>
<dbReference type="VEuPathDB" id="FungiDB:SPBC3H7.06c"/>
<dbReference type="eggNOG" id="ENOG502QUVE">
    <property type="taxonomic scope" value="Eukaryota"/>
</dbReference>
<dbReference type="HOGENOM" id="CLU_585471_0_0_1"/>
<dbReference type="InParanoid" id="O74381"/>
<dbReference type="OMA" id="LCKRIEG"/>
<dbReference type="PhylomeDB" id="O74381"/>
<dbReference type="PRO" id="PR:O74381"/>
<dbReference type="Proteomes" id="UP000002485">
    <property type="component" value="Chromosome II"/>
</dbReference>
<dbReference type="GO" id="GO:0005737">
    <property type="term" value="C:cytoplasm"/>
    <property type="evidence" value="ECO:0000318"/>
    <property type="project" value="GO_Central"/>
</dbReference>
<dbReference type="GO" id="GO:0005829">
    <property type="term" value="C:cytosol"/>
    <property type="evidence" value="ECO:0007005"/>
    <property type="project" value="PomBase"/>
</dbReference>
<dbReference type="GO" id="GO:0005634">
    <property type="term" value="C:nucleus"/>
    <property type="evidence" value="ECO:0007005"/>
    <property type="project" value="PomBase"/>
</dbReference>
<dbReference type="GO" id="GO:0000151">
    <property type="term" value="C:ubiquitin ligase complex"/>
    <property type="evidence" value="ECO:0000255"/>
    <property type="project" value="PomBase"/>
</dbReference>
<dbReference type="GO" id="GO:1990756">
    <property type="term" value="F:ubiquitin-like ligase-substrate adaptor activity"/>
    <property type="evidence" value="ECO:0000255"/>
    <property type="project" value="PomBase"/>
</dbReference>
<dbReference type="GO" id="GO:0031146">
    <property type="term" value="P:SCF-dependent proteasomal ubiquitin-dependent protein catabolic process"/>
    <property type="evidence" value="ECO:0000304"/>
    <property type="project" value="PomBase"/>
</dbReference>
<dbReference type="Gene3D" id="1.20.1280.50">
    <property type="match status" value="1"/>
</dbReference>
<dbReference type="Gene3D" id="2.130.10.30">
    <property type="entry name" value="Regulator of chromosome condensation 1/beta-lactamase-inhibitor protein II"/>
    <property type="match status" value="2"/>
</dbReference>
<dbReference type="InterPro" id="IPR036047">
    <property type="entry name" value="F-box-like_dom_sf"/>
</dbReference>
<dbReference type="InterPro" id="IPR001810">
    <property type="entry name" value="F-box_dom"/>
</dbReference>
<dbReference type="InterPro" id="IPR051553">
    <property type="entry name" value="Ran_GTPase-activating"/>
</dbReference>
<dbReference type="InterPro" id="IPR009091">
    <property type="entry name" value="RCC1/BLIP-II"/>
</dbReference>
<dbReference type="InterPro" id="IPR000408">
    <property type="entry name" value="Reg_chr_condens"/>
</dbReference>
<dbReference type="PANTHER" id="PTHR45982:SF3">
    <property type="entry name" value="F-BOX PROTEIN POF9"/>
    <property type="match status" value="1"/>
</dbReference>
<dbReference type="PANTHER" id="PTHR45982">
    <property type="entry name" value="REGULATOR OF CHROMOSOME CONDENSATION"/>
    <property type="match status" value="1"/>
</dbReference>
<dbReference type="Pfam" id="PF12937">
    <property type="entry name" value="F-box-like"/>
    <property type="match status" value="1"/>
</dbReference>
<dbReference type="SMART" id="SM00256">
    <property type="entry name" value="FBOX"/>
    <property type="match status" value="1"/>
</dbReference>
<dbReference type="SUPFAM" id="SSF81383">
    <property type="entry name" value="F-box domain"/>
    <property type="match status" value="1"/>
</dbReference>
<dbReference type="SUPFAM" id="SSF50985">
    <property type="entry name" value="RCC1/BLIP-II"/>
    <property type="match status" value="1"/>
</dbReference>
<dbReference type="PROSITE" id="PS50181">
    <property type="entry name" value="FBOX"/>
    <property type="match status" value="1"/>
</dbReference>
<dbReference type="PROSITE" id="PS50012">
    <property type="entry name" value="RCC1_3"/>
    <property type="match status" value="2"/>
</dbReference>
<name>POF9_SCHPO</name>
<gene>
    <name type="primary">pof9</name>
    <name type="ORF">SPBC3H7.06c</name>
</gene>
<keyword id="KW-0963">Cytoplasm</keyword>
<keyword id="KW-0539">Nucleus</keyword>
<keyword id="KW-1185">Reference proteome</keyword>
<keyword id="KW-0677">Repeat</keyword>
<keyword id="KW-0833">Ubl conjugation pathway</keyword>
<protein>
    <recommendedName>
        <fullName>F-box protein pof9</fullName>
    </recommendedName>
</protein>
<evidence type="ECO:0000255" key="1">
    <source>
        <dbReference type="PROSITE-ProRule" id="PRU00080"/>
    </source>
</evidence>
<evidence type="ECO:0000269" key="2">
    <source>
    </source>
</evidence>
<evidence type="ECO:0000269" key="3">
    <source>
    </source>
</evidence>
<comment type="subunit">
    <text evidence="2">Interacts with skp1.</text>
</comment>
<comment type="subcellular location">
    <subcellularLocation>
        <location evidence="3">Cytoplasm</location>
    </subcellularLocation>
    <subcellularLocation>
        <location evidence="3">Nucleus</location>
    </subcellularLocation>
</comment>
<sequence>MAKSPFLELSYDILLEISTYLDYKDIVHLSETCKSLSYVFDDKTIWHRFCARVQGLTNVVPVVDDNYKRPYAVWKDRGYAYSWGQQIRNYLGRVVNTNQYPRDRPGALTGKDVRSTIQVQVGGYGMYLLNENGNLYVTGVPNNVGPELMRDLEPIVKIHAGREFCLALGETGHLYQVSLKTRICLTDEQNMLSAYRGRIANFKSGWDSHSAYVPGIGFLVWHTGRESEAQLFQPEASMKEFVLNDYVHCAGFLVYTVASPQKKGAVFRLDLDQATQHTLGRELKRFASHDPHQGWHLAGSFETFTCLSDDGNTVYMGHANTKQVDDDPVIHDFLQNRGIKQLAHGDHHHLYLTSDHSIWSWGVELRYCGCLGLGSLHLQEQTSDPSIVSDPRTARNIVSIPHQIHFSGTCYSVAAGGWQSAALAISESVLPEVNVPPITTFSIIRPSRVPALRFLAAPATRTLERDG</sequence>
<accession>O74381</accession>